<comment type="function">
    <text>Sulfur-rich seed storage protein.</text>
</comment>
<comment type="tissue specificity">
    <text>Developing endosperm.</text>
</comment>
<comment type="similarity">
    <text evidence="2">Belongs to the gliadin/glutenin family.</text>
</comment>
<dbReference type="EMBL" id="X01777">
    <property type="protein sequence ID" value="CAA25912.1"/>
    <property type="molecule type" value="mRNA"/>
</dbReference>
<dbReference type="EMBL" id="M23869">
    <property type="protein sequence ID" value="AAA32967.1"/>
    <property type="molecule type" value="mRNA"/>
</dbReference>
<dbReference type="PIR" id="S07975">
    <property type="entry name" value="S07975"/>
</dbReference>
<dbReference type="ExpressionAtlas" id="P06471">
    <property type="expression patterns" value="baseline"/>
</dbReference>
<dbReference type="GO" id="GO:0045735">
    <property type="term" value="F:nutrient reservoir activity"/>
    <property type="evidence" value="ECO:0007669"/>
    <property type="project" value="UniProtKB-KW"/>
</dbReference>
<dbReference type="Gene3D" id="1.10.110.10">
    <property type="entry name" value="Plant lipid-transfer and hydrophobic proteins"/>
    <property type="match status" value="1"/>
</dbReference>
<dbReference type="InterPro" id="IPR036312">
    <property type="entry name" value="Bifun_inhib/LTP/seed_sf"/>
</dbReference>
<dbReference type="InterPro" id="IPR016140">
    <property type="entry name" value="Bifunc_inhib/LTP/seed_store"/>
</dbReference>
<dbReference type="InterPro" id="IPR001954">
    <property type="entry name" value="Glia_glutenin"/>
</dbReference>
<dbReference type="PANTHER" id="PTHR33454:SF18">
    <property type="entry name" value="GLUTENIN, LOW MOLECULAR WEIGHT SUBUNIT"/>
    <property type="match status" value="1"/>
</dbReference>
<dbReference type="PANTHER" id="PTHR33454">
    <property type="entry name" value="PROLAMIN PPROL 14P"/>
    <property type="match status" value="1"/>
</dbReference>
<dbReference type="Pfam" id="PF13016">
    <property type="entry name" value="Gliadin"/>
    <property type="match status" value="1"/>
</dbReference>
<dbReference type="PRINTS" id="PR00208">
    <property type="entry name" value="GLIADGLUTEN"/>
</dbReference>
<dbReference type="PRINTS" id="PR00209">
    <property type="entry name" value="GLIADIN"/>
</dbReference>
<dbReference type="SMART" id="SM00499">
    <property type="entry name" value="AAI"/>
    <property type="match status" value="1"/>
</dbReference>
<dbReference type="SUPFAM" id="SSF47699">
    <property type="entry name" value="Bifunctional inhibitor/lipid-transfer protein/seed storage 2S albumin"/>
    <property type="match status" value="1"/>
</dbReference>
<proteinExistence type="evidence at protein level"/>
<accession>P06471</accession>
<name>HOR3_HORVU</name>
<sequence>QQPVSRQPQQIIPQQPQQPFPLQPQQPQPFPQQPIPQQPQPYPQQPQSFPQQPFPSQQPFPQQPPFWQQQPVLSQQQPCTQDQTPLLQEQQDQMLVQVQIPFVHPSILQQLNPCKVFLQQQCSPLAMSQRIARSQMLQQSSCHVLQQQCCQQLPQIPEQLRHEAVRAIVYSIVLQEQSLQLVQGVSQPQQQSQQQQVGQCSFQQPQPQQGQQQQVPQSVFLQPHQIAQLEATTSIALRTLPTMCSVNVPLYRIVPLAIDTRVGV</sequence>
<organism>
    <name type="scientific">Hordeum vulgare</name>
    <name type="common">Barley</name>
    <dbReference type="NCBI Taxonomy" id="4513"/>
    <lineage>
        <taxon>Eukaryota</taxon>
        <taxon>Viridiplantae</taxon>
        <taxon>Streptophyta</taxon>
        <taxon>Embryophyta</taxon>
        <taxon>Tracheophyta</taxon>
        <taxon>Spermatophyta</taxon>
        <taxon>Magnoliopsida</taxon>
        <taxon>Liliopsida</taxon>
        <taxon>Poales</taxon>
        <taxon>Poaceae</taxon>
        <taxon>BOP clade</taxon>
        <taxon>Pooideae</taxon>
        <taxon>Triticodae</taxon>
        <taxon>Triticeae</taxon>
        <taxon>Hordeinae</taxon>
        <taxon>Hordeum</taxon>
    </lineage>
</organism>
<reference key="1">
    <citation type="journal article" date="1985" name="EMBO J.">
        <title>Short tandem repeats shared by B- and C-hordein cDNAs suggest a common evolutionary origin for two groups of cereal storage protein genes.</title>
        <authorList>
            <person name="Forde B.G."/>
            <person name="Kreis M."/>
            <person name="Williamson M.S."/>
            <person name="Fry R.P."/>
            <person name="Pywell J."/>
            <person name="Shewry P.R."/>
            <person name="Bunce N."/>
            <person name="Miflin B.J."/>
        </authorList>
    </citation>
    <scope>NUCLEOTIDE SEQUENCE [MRNA]</scope>
</reference>
<reference key="2">
    <citation type="journal article" date="1983" name="Carlsberg Res. Commun.">
        <title>Nucleotide sequences of cDNA clones for B1 hordein polypeptides.</title>
        <authorList>
            <person name="Rasmussen S.K."/>
            <person name="Hopp H.E."/>
            <person name="Brandt A."/>
        </authorList>
    </citation>
    <scope>NUCLEOTIDE SEQUENCE [MRNA] OF 211-264</scope>
</reference>
<reference key="3">
    <citation type="journal article" date="2000" name="Electrophoresis">
        <title>Separation and characterization of basic barley seed proteins.</title>
        <authorList>
            <person name="Kristoffersen H.E."/>
            <person name="Flengsrud R."/>
        </authorList>
    </citation>
    <scope>PROTEIN SEQUENCE OF 136-146</scope>
    <source>
        <strain>cv. Bomi</strain>
        <tissue>Starchy endosperm</tissue>
    </source>
</reference>
<protein>
    <recommendedName>
        <fullName>B3-hordein</fullName>
    </recommendedName>
</protein>
<evidence type="ECO:0000256" key="1">
    <source>
        <dbReference type="SAM" id="MobiDB-lite"/>
    </source>
</evidence>
<evidence type="ECO:0000305" key="2"/>
<keyword id="KW-0903">Direct protein sequencing</keyword>
<keyword id="KW-0708">Seed storage protein</keyword>
<keyword id="KW-0758">Storage protein</keyword>
<feature type="chain" id="PRO_0000102601" description="B3-hordein">
    <location>
        <begin position="1" status="less than"/>
        <end position="264"/>
    </location>
</feature>
<feature type="region of interest" description="Disordered" evidence="1">
    <location>
        <begin position="1"/>
        <end position="66"/>
    </location>
</feature>
<feature type="compositionally biased region" description="Low complexity" evidence="1">
    <location>
        <begin position="1"/>
        <end position="15"/>
    </location>
</feature>
<feature type="compositionally biased region" description="Pro residues" evidence="1">
    <location>
        <begin position="16"/>
        <end position="44"/>
    </location>
</feature>
<feature type="compositionally biased region" description="Pro residues" evidence="1">
    <location>
        <begin position="52"/>
        <end position="64"/>
    </location>
</feature>
<feature type="non-terminal residue">
    <location>
        <position position="1"/>
    </location>
</feature>